<dbReference type="EMBL" id="X63372">
    <property type="protein sequence ID" value="CAA44972.1"/>
    <property type="molecule type" value="Genomic_DNA"/>
</dbReference>
<dbReference type="PIR" id="JC1312">
    <property type="entry name" value="JC1312"/>
</dbReference>
<dbReference type="SMR" id="P30668"/>
<dbReference type="VEuPathDB" id="FungiDB:SCHCODRAFT_02629605"/>
<dbReference type="GO" id="GO:0005737">
    <property type="term" value="C:cytoplasm"/>
    <property type="evidence" value="ECO:0007669"/>
    <property type="project" value="UniProtKB-KW"/>
</dbReference>
<dbReference type="GO" id="GO:0005874">
    <property type="term" value="C:microtubule"/>
    <property type="evidence" value="ECO:0007669"/>
    <property type="project" value="UniProtKB-KW"/>
</dbReference>
<dbReference type="GO" id="GO:0005525">
    <property type="term" value="F:GTP binding"/>
    <property type="evidence" value="ECO:0007669"/>
    <property type="project" value="UniProtKB-KW"/>
</dbReference>
<dbReference type="GO" id="GO:0003924">
    <property type="term" value="F:GTPase activity"/>
    <property type="evidence" value="ECO:0007669"/>
    <property type="project" value="InterPro"/>
</dbReference>
<dbReference type="GO" id="GO:0046872">
    <property type="term" value="F:metal ion binding"/>
    <property type="evidence" value="ECO:0007669"/>
    <property type="project" value="UniProtKB-KW"/>
</dbReference>
<dbReference type="GO" id="GO:0005200">
    <property type="term" value="F:structural constituent of cytoskeleton"/>
    <property type="evidence" value="ECO:0007669"/>
    <property type="project" value="InterPro"/>
</dbReference>
<dbReference type="GO" id="GO:0007017">
    <property type="term" value="P:microtubule-based process"/>
    <property type="evidence" value="ECO:0007669"/>
    <property type="project" value="InterPro"/>
</dbReference>
<dbReference type="CDD" id="cd02187">
    <property type="entry name" value="beta_tubulin"/>
    <property type="match status" value="1"/>
</dbReference>
<dbReference type="FunFam" id="1.10.287.600:FF:000006">
    <property type="entry name" value="Tubulin beta chain"/>
    <property type="match status" value="1"/>
</dbReference>
<dbReference type="FunFam" id="3.30.1330.20:FF:000002">
    <property type="entry name" value="Tubulin beta chain"/>
    <property type="match status" value="1"/>
</dbReference>
<dbReference type="FunFam" id="3.40.50.1440:FF:000003">
    <property type="entry name" value="Tubulin beta chain"/>
    <property type="match status" value="1"/>
</dbReference>
<dbReference type="Gene3D" id="1.10.287.600">
    <property type="entry name" value="Helix hairpin bin"/>
    <property type="match status" value="1"/>
</dbReference>
<dbReference type="Gene3D" id="3.30.1330.20">
    <property type="entry name" value="Tubulin/FtsZ, C-terminal domain"/>
    <property type="match status" value="1"/>
</dbReference>
<dbReference type="Gene3D" id="3.40.50.1440">
    <property type="entry name" value="Tubulin/FtsZ, GTPase domain"/>
    <property type="match status" value="1"/>
</dbReference>
<dbReference type="InterPro" id="IPR013838">
    <property type="entry name" value="Beta-tubulin_BS"/>
</dbReference>
<dbReference type="InterPro" id="IPR002453">
    <property type="entry name" value="Beta_tubulin"/>
</dbReference>
<dbReference type="InterPro" id="IPR008280">
    <property type="entry name" value="Tub_FtsZ_C"/>
</dbReference>
<dbReference type="InterPro" id="IPR000217">
    <property type="entry name" value="Tubulin"/>
</dbReference>
<dbReference type="InterPro" id="IPR037103">
    <property type="entry name" value="Tubulin/FtsZ-like_C"/>
</dbReference>
<dbReference type="InterPro" id="IPR018316">
    <property type="entry name" value="Tubulin/FtsZ_2-layer-sand-dom"/>
</dbReference>
<dbReference type="InterPro" id="IPR036525">
    <property type="entry name" value="Tubulin/FtsZ_GTPase_sf"/>
</dbReference>
<dbReference type="InterPro" id="IPR023123">
    <property type="entry name" value="Tubulin_C"/>
</dbReference>
<dbReference type="InterPro" id="IPR017975">
    <property type="entry name" value="Tubulin_CS"/>
</dbReference>
<dbReference type="InterPro" id="IPR003008">
    <property type="entry name" value="Tubulin_FtsZ_GTPase"/>
</dbReference>
<dbReference type="PANTHER" id="PTHR11588">
    <property type="entry name" value="TUBULIN"/>
    <property type="match status" value="1"/>
</dbReference>
<dbReference type="Pfam" id="PF00091">
    <property type="entry name" value="Tubulin"/>
    <property type="match status" value="1"/>
</dbReference>
<dbReference type="Pfam" id="PF03953">
    <property type="entry name" value="Tubulin_C"/>
    <property type="match status" value="1"/>
</dbReference>
<dbReference type="PRINTS" id="PR01163">
    <property type="entry name" value="BETATUBULIN"/>
</dbReference>
<dbReference type="PRINTS" id="PR01161">
    <property type="entry name" value="TUBULIN"/>
</dbReference>
<dbReference type="SMART" id="SM00864">
    <property type="entry name" value="Tubulin"/>
    <property type="match status" value="1"/>
</dbReference>
<dbReference type="SMART" id="SM00865">
    <property type="entry name" value="Tubulin_C"/>
    <property type="match status" value="1"/>
</dbReference>
<dbReference type="SUPFAM" id="SSF55307">
    <property type="entry name" value="Tubulin C-terminal domain-like"/>
    <property type="match status" value="1"/>
</dbReference>
<dbReference type="SUPFAM" id="SSF52490">
    <property type="entry name" value="Tubulin nucleotide-binding domain-like"/>
    <property type="match status" value="1"/>
</dbReference>
<dbReference type="PROSITE" id="PS00227">
    <property type="entry name" value="TUBULIN"/>
    <property type="match status" value="1"/>
</dbReference>
<dbReference type="PROSITE" id="PS00228">
    <property type="entry name" value="TUBULIN_B_AUTOREG"/>
    <property type="match status" value="1"/>
</dbReference>
<keyword id="KW-0963">Cytoplasm</keyword>
<keyword id="KW-0206">Cytoskeleton</keyword>
<keyword id="KW-0342">GTP-binding</keyword>
<keyword id="KW-0460">Magnesium</keyword>
<keyword id="KW-0479">Metal-binding</keyword>
<keyword id="KW-0493">Microtubule</keyword>
<keyword id="KW-0547">Nucleotide-binding</keyword>
<sequence length="445" mass="49915">MREIVHLQTGQCGNQIGAKFWEVVSDEHGIEADGLYKGTNDQQLERISVYYNEIGANKYVPRAILVDLEPGTMDSVRSGPLGGLFRPDNFVFGQSGAGNNWAKGHYTEGAELVDAVLDVVRKEAEGTDCLQGFQITHSLGGGTGAGMGTLLISKIREEYPDRMMCTFSVVPSPKVSDTVVEPYNATLSVHQLVENSDETFCIDNEALYDICFRTLKLSTPTYGDLNHLVSFVMSGITTSLRFPGQLNSDLRKLAVNLVPFPRLHFFMTGFAPLTARGSQQYRAVTVPELTQQMFDAKNMMAASDPRHGRYLTVAAMFRGKVSMKEVEEQMQNVQNKNSAYFVEWIPNNVLASQCDIAPRGLRMSVTFLGNSTAIQELFKRVSDQFTAMFKRKAFLHWYTQEGMDEMEFTEAESNMQDLVAEYQQYQDATVEEEGEYEEEVIEDQE</sequence>
<comment type="function">
    <text>Tubulin is the major constituent of microtubules, a cylinder consisting of laterally associated linear protofilaments composed of alpha- and beta-tubulin heterodimers. Microtubules grow by the addition of GTP-tubulin dimers to the microtubule end, where a stabilizing cap forms. Below the cap, tubulin dimers are in GDP-bound state, owing to GTPase activity of alpha-tubulin.</text>
</comment>
<comment type="cofactor">
    <cofactor evidence="1">
        <name>Mg(2+)</name>
        <dbReference type="ChEBI" id="CHEBI:18420"/>
    </cofactor>
</comment>
<comment type="subunit">
    <text>Dimer of alpha and beta chains. A typical microtubule is a hollow water-filled tube with an outer diameter of 25 nm and an inner diameter of 15 nM. Alpha-beta heterodimers associate head-to-tail to form protofilaments running lengthwise along the microtubule wall with the beta-tubulin subunit facing the microtubule plus end conferring a structural polarity. Microtubules usually have 13 protofilaments but different protofilament numbers can be found in some organisms and specialized cells.</text>
</comment>
<comment type="subcellular location">
    <subcellularLocation>
        <location>Cytoplasm</location>
        <location>Cytoskeleton</location>
    </subcellularLocation>
</comment>
<comment type="similarity">
    <text evidence="3">Belongs to the tubulin family.</text>
</comment>
<evidence type="ECO:0000250" key="1">
    <source>
        <dbReference type="UniProtKB" id="P68363"/>
    </source>
</evidence>
<evidence type="ECO:0000250" key="2">
    <source>
        <dbReference type="UniProtKB" id="Q13509"/>
    </source>
</evidence>
<evidence type="ECO:0000305" key="3"/>
<name>TBB_SCHCO</name>
<organism>
    <name type="scientific">Schizophyllum commune</name>
    <name type="common">Split gill fungus</name>
    <dbReference type="NCBI Taxonomy" id="5334"/>
    <lineage>
        <taxon>Eukaryota</taxon>
        <taxon>Fungi</taxon>
        <taxon>Dikarya</taxon>
        <taxon>Basidiomycota</taxon>
        <taxon>Agaricomycotina</taxon>
        <taxon>Agaricomycetes</taxon>
        <taxon>Agaricomycetidae</taxon>
        <taxon>Agaricales</taxon>
        <taxon>Schizophyllaceae</taxon>
        <taxon>Schizophyllum</taxon>
    </lineage>
</organism>
<feature type="chain" id="PRO_0000048429" description="Tubulin beta chain">
    <location>
        <begin position="1"/>
        <end position="445"/>
    </location>
</feature>
<feature type="binding site" evidence="2">
    <location>
        <position position="11"/>
    </location>
    <ligand>
        <name>GTP</name>
        <dbReference type="ChEBI" id="CHEBI:37565"/>
    </ligand>
</feature>
<feature type="binding site" evidence="1">
    <location>
        <position position="69"/>
    </location>
    <ligand>
        <name>GTP</name>
        <dbReference type="ChEBI" id="CHEBI:37565"/>
    </ligand>
</feature>
<feature type="binding site" evidence="1">
    <location>
        <position position="69"/>
    </location>
    <ligand>
        <name>Mg(2+)</name>
        <dbReference type="ChEBI" id="CHEBI:18420"/>
    </ligand>
</feature>
<feature type="binding site" evidence="2">
    <location>
        <position position="138"/>
    </location>
    <ligand>
        <name>GTP</name>
        <dbReference type="ChEBI" id="CHEBI:37565"/>
    </ligand>
</feature>
<feature type="binding site" evidence="2">
    <location>
        <position position="142"/>
    </location>
    <ligand>
        <name>GTP</name>
        <dbReference type="ChEBI" id="CHEBI:37565"/>
    </ligand>
</feature>
<feature type="binding site" evidence="2">
    <location>
        <position position="143"/>
    </location>
    <ligand>
        <name>GTP</name>
        <dbReference type="ChEBI" id="CHEBI:37565"/>
    </ligand>
</feature>
<feature type="binding site" evidence="2">
    <location>
        <position position="144"/>
    </location>
    <ligand>
        <name>GTP</name>
        <dbReference type="ChEBI" id="CHEBI:37565"/>
    </ligand>
</feature>
<feature type="binding site" evidence="2">
    <location>
        <position position="204"/>
    </location>
    <ligand>
        <name>GTP</name>
        <dbReference type="ChEBI" id="CHEBI:37565"/>
    </ligand>
</feature>
<feature type="binding site" evidence="2">
    <location>
        <position position="226"/>
    </location>
    <ligand>
        <name>GTP</name>
        <dbReference type="ChEBI" id="CHEBI:37565"/>
    </ligand>
</feature>
<proteinExistence type="inferred from homology"/>
<reference key="1">
    <citation type="journal article" date="1992" name="Gene">
        <title>Cloning, sequence and expression of a beta-tubulin-encoding gene in the homobasidiomycete Schizophyllum commune.</title>
        <authorList>
            <person name="Russo P."/>
            <person name="Juuti J.T."/>
            <person name="Raudaskoski M."/>
        </authorList>
    </citation>
    <scope>NUCLEOTIDE SEQUENCE [GENOMIC DNA]</scope>
    <source>
        <strain>ATCC 44200 / CBS 341.81 / 4-39</strain>
    </source>
</reference>
<accession>P30668</accession>
<gene>
    <name type="primary">TUB-2</name>
</gene>
<protein>
    <recommendedName>
        <fullName>Tubulin beta chain</fullName>
    </recommendedName>
    <alternativeName>
        <fullName>Beta-tubulin</fullName>
    </alternativeName>
</protein>